<accession>B0T1K8</accession>
<feature type="chain" id="PRO_1000197828" description="UPF0178 protein Caul_3070">
    <location>
        <begin position="1"/>
        <end position="151"/>
    </location>
</feature>
<evidence type="ECO:0000255" key="1">
    <source>
        <dbReference type="HAMAP-Rule" id="MF_00489"/>
    </source>
</evidence>
<sequence>MTVLYIDADACPVKDEVYKVAARYGLKTFVVSNSWIRVPLTPAIEQIVVDAGPDIADDWIAERAGPGDVVITNDIPLADRVLKAGGAALGTTGRLFTVDTIGSALASRMIGEHLRSMGEITSGPKAFGPADRSKFLQALDTAVVKARRVVR</sequence>
<reference key="1">
    <citation type="submission" date="2008-01" db="EMBL/GenBank/DDBJ databases">
        <title>Complete sequence of chromosome of Caulobacter sp. K31.</title>
        <authorList>
            <consortium name="US DOE Joint Genome Institute"/>
            <person name="Copeland A."/>
            <person name="Lucas S."/>
            <person name="Lapidus A."/>
            <person name="Barry K."/>
            <person name="Glavina del Rio T."/>
            <person name="Dalin E."/>
            <person name="Tice H."/>
            <person name="Pitluck S."/>
            <person name="Bruce D."/>
            <person name="Goodwin L."/>
            <person name="Thompson L.S."/>
            <person name="Brettin T."/>
            <person name="Detter J.C."/>
            <person name="Han C."/>
            <person name="Schmutz J."/>
            <person name="Larimer F."/>
            <person name="Land M."/>
            <person name="Hauser L."/>
            <person name="Kyrpides N."/>
            <person name="Kim E."/>
            <person name="Stephens C."/>
            <person name="Richardson P."/>
        </authorList>
    </citation>
    <scope>NUCLEOTIDE SEQUENCE [LARGE SCALE GENOMIC DNA]</scope>
    <source>
        <strain>K31</strain>
    </source>
</reference>
<dbReference type="EMBL" id="CP000927">
    <property type="protein sequence ID" value="ABZ72197.1"/>
    <property type="molecule type" value="Genomic_DNA"/>
</dbReference>
<dbReference type="STRING" id="366602.Caul_3070"/>
<dbReference type="KEGG" id="cak:Caul_3070"/>
<dbReference type="eggNOG" id="COG1671">
    <property type="taxonomic scope" value="Bacteria"/>
</dbReference>
<dbReference type="HOGENOM" id="CLU_106619_2_1_5"/>
<dbReference type="OrthoDB" id="9798918at2"/>
<dbReference type="CDD" id="cd18720">
    <property type="entry name" value="PIN_YqxD-like"/>
    <property type="match status" value="1"/>
</dbReference>
<dbReference type="HAMAP" id="MF_00489">
    <property type="entry name" value="UPF0178"/>
    <property type="match status" value="1"/>
</dbReference>
<dbReference type="InterPro" id="IPR003791">
    <property type="entry name" value="UPF0178"/>
</dbReference>
<dbReference type="NCBIfam" id="NF001095">
    <property type="entry name" value="PRK00124.1"/>
    <property type="match status" value="1"/>
</dbReference>
<dbReference type="PANTHER" id="PTHR35146">
    <property type="entry name" value="UPF0178 PROTEIN YAII"/>
    <property type="match status" value="1"/>
</dbReference>
<dbReference type="PANTHER" id="PTHR35146:SF1">
    <property type="entry name" value="UPF0178 PROTEIN YAII"/>
    <property type="match status" value="1"/>
</dbReference>
<dbReference type="Pfam" id="PF02639">
    <property type="entry name" value="DUF188"/>
    <property type="match status" value="1"/>
</dbReference>
<protein>
    <recommendedName>
        <fullName evidence="1">UPF0178 protein Caul_3070</fullName>
    </recommendedName>
</protein>
<name>Y3070_CAUSK</name>
<comment type="similarity">
    <text evidence="1">Belongs to the UPF0178 family.</text>
</comment>
<organism>
    <name type="scientific">Caulobacter sp. (strain K31)</name>
    <dbReference type="NCBI Taxonomy" id="366602"/>
    <lineage>
        <taxon>Bacteria</taxon>
        <taxon>Pseudomonadati</taxon>
        <taxon>Pseudomonadota</taxon>
        <taxon>Alphaproteobacteria</taxon>
        <taxon>Caulobacterales</taxon>
        <taxon>Caulobacteraceae</taxon>
        <taxon>Caulobacter</taxon>
    </lineage>
</organism>
<proteinExistence type="inferred from homology"/>
<gene>
    <name type="ordered locus">Caul_3070</name>
</gene>